<name>LSP_APIME</name>
<keyword id="KW-0903">Direct protein sequencing</keyword>
<keyword id="KW-0449">Lipoprotein</keyword>
<keyword id="KW-1185">Reference proteome</keyword>
<keyword id="KW-0964">Secreted</keyword>
<proteinExistence type="evidence at protein level"/>
<comment type="function">
    <text>Unknown (it might play a role in lipid transport and/or storage protein metabolism during metamorphosis).</text>
</comment>
<comment type="subunit">
    <text>Homodimer.</text>
</comment>
<comment type="subcellular location">
    <subcellularLocation>
        <location>Secreted</location>
        <location>Extracellular space</location>
    </subcellularLocation>
</comment>
<comment type="tissue specificity">
    <text>Hemolymph.</text>
</comment>
<comment type="developmental stage">
    <text>Present in high amounts in hemolymph only at the end of larval life.</text>
</comment>
<protein>
    <recommendedName>
        <fullName>Larval-specific very high density lipoprotein</fullName>
        <shortName>VHDL</shortName>
    </recommendedName>
</protein>
<sequence>VAPFPHGKLVTYKYIADVKAGVDPSLV</sequence>
<accession>P09355</accession>
<reference key="1">
    <citation type="journal article" date="1987" name="Biochemistry">
        <title>Purification and properties of a very high density lipoprotein from the hemolymph of the honeybee Apis mellifera.</title>
        <authorList>
            <person name="Shipman B.A."/>
            <person name="Ryan R.O."/>
            <person name="Schmidt J.O."/>
            <person name="Law J.H."/>
        </authorList>
    </citation>
    <scope>PROTEIN SEQUENCE</scope>
    <source>
        <tissue>Hemolymph</tissue>
    </source>
</reference>
<organism>
    <name type="scientific">Apis mellifera</name>
    <name type="common">Honeybee</name>
    <dbReference type="NCBI Taxonomy" id="7460"/>
    <lineage>
        <taxon>Eukaryota</taxon>
        <taxon>Metazoa</taxon>
        <taxon>Ecdysozoa</taxon>
        <taxon>Arthropoda</taxon>
        <taxon>Hexapoda</taxon>
        <taxon>Insecta</taxon>
        <taxon>Pterygota</taxon>
        <taxon>Neoptera</taxon>
        <taxon>Endopterygota</taxon>
        <taxon>Hymenoptera</taxon>
        <taxon>Apocrita</taxon>
        <taxon>Aculeata</taxon>
        <taxon>Apoidea</taxon>
        <taxon>Anthophila</taxon>
        <taxon>Apidae</taxon>
        <taxon>Apis</taxon>
    </lineage>
</organism>
<dbReference type="PIR" id="A27108">
    <property type="entry name" value="A27108"/>
</dbReference>
<dbReference type="PaxDb" id="7460-GB50662-PA"/>
<dbReference type="eggNOG" id="KOG4338">
    <property type="taxonomic scope" value="Eukaryota"/>
</dbReference>
<dbReference type="InParanoid" id="P09355"/>
<dbReference type="Proteomes" id="UP000005203">
    <property type="component" value="Unplaced"/>
</dbReference>
<dbReference type="GO" id="GO:0005576">
    <property type="term" value="C:extracellular region"/>
    <property type="evidence" value="ECO:0007669"/>
    <property type="project" value="UniProtKB-SubCell"/>
</dbReference>
<feature type="chain" id="PRO_0000084506" description="Larval-specific very high density lipoprotein">
    <location>
        <begin position="1"/>
        <end position="27" status="greater than"/>
    </location>
</feature>
<feature type="non-terminal residue">
    <location>
        <position position="27"/>
    </location>
</feature>